<name>IF12_POLSJ</name>
<protein>
    <recommendedName>
        <fullName evidence="1">Translation initiation factor IF-1 2</fullName>
    </recommendedName>
</protein>
<accession>Q12DT7</accession>
<feature type="chain" id="PRO_0000263837" description="Translation initiation factor IF-1 2">
    <location>
        <begin position="1"/>
        <end position="85"/>
    </location>
</feature>
<feature type="domain" description="S1-like" evidence="1">
    <location>
        <begin position="1"/>
        <end position="72"/>
    </location>
</feature>
<comment type="function">
    <text evidence="1">One of the essential components for the initiation of protein synthesis. Stabilizes the binding of IF-2 and IF-3 on the 30S subunit to which N-formylmethionyl-tRNA(fMet) subsequently binds. Helps modulate mRNA selection, yielding the 30S pre-initiation complex (PIC). Upon addition of the 50S ribosomal subunit IF-1, IF-2 and IF-3 are released leaving the mature 70S translation initiation complex.</text>
</comment>
<comment type="subunit">
    <text evidence="1">Component of the 30S ribosomal translation pre-initiation complex which assembles on the 30S ribosome in the order IF-2 and IF-3, IF-1 and N-formylmethionyl-tRNA(fMet); mRNA recruitment can occur at any time during PIC assembly.</text>
</comment>
<comment type="subcellular location">
    <subcellularLocation>
        <location evidence="1">Cytoplasm</location>
    </subcellularLocation>
</comment>
<comment type="similarity">
    <text evidence="1">Belongs to the IF-1 family.</text>
</comment>
<reference key="1">
    <citation type="journal article" date="2008" name="Appl. Environ. Microbiol.">
        <title>The genome of Polaromonas sp. strain JS666: insights into the evolution of a hydrocarbon- and xenobiotic-degrading bacterium, and features of relevance to biotechnology.</title>
        <authorList>
            <person name="Mattes T.E."/>
            <person name="Alexander A.K."/>
            <person name="Richardson P.M."/>
            <person name="Munk A.C."/>
            <person name="Han C.S."/>
            <person name="Stothard P."/>
            <person name="Coleman N.V."/>
        </authorList>
    </citation>
    <scope>NUCLEOTIDE SEQUENCE [LARGE SCALE GENOMIC DNA]</scope>
    <source>
        <strain>JS666 / ATCC BAA-500</strain>
    </source>
</reference>
<organism>
    <name type="scientific">Polaromonas sp. (strain JS666 / ATCC BAA-500)</name>
    <dbReference type="NCBI Taxonomy" id="296591"/>
    <lineage>
        <taxon>Bacteria</taxon>
        <taxon>Pseudomonadati</taxon>
        <taxon>Pseudomonadota</taxon>
        <taxon>Betaproteobacteria</taxon>
        <taxon>Burkholderiales</taxon>
        <taxon>Comamonadaceae</taxon>
        <taxon>Polaromonas</taxon>
    </lineage>
</organism>
<evidence type="ECO:0000255" key="1">
    <source>
        <dbReference type="HAMAP-Rule" id="MF_00075"/>
    </source>
</evidence>
<gene>
    <name evidence="1" type="primary">infA2</name>
    <name type="ordered locus">Bpro_1356</name>
</gene>
<proteinExistence type="inferred from homology"/>
<dbReference type="EMBL" id="CP000316">
    <property type="protein sequence ID" value="ABE43305.1"/>
    <property type="molecule type" value="Genomic_DNA"/>
</dbReference>
<dbReference type="RefSeq" id="WP_011482304.1">
    <property type="nucleotide sequence ID" value="NC_007948.1"/>
</dbReference>
<dbReference type="SMR" id="Q12DT7"/>
<dbReference type="STRING" id="296591.Bpro_1356"/>
<dbReference type="KEGG" id="pol:Bpro_1356"/>
<dbReference type="eggNOG" id="COG0361">
    <property type="taxonomic scope" value="Bacteria"/>
</dbReference>
<dbReference type="HOGENOM" id="CLU_151267_4_1_4"/>
<dbReference type="OrthoDB" id="9803250at2"/>
<dbReference type="Proteomes" id="UP000001983">
    <property type="component" value="Chromosome"/>
</dbReference>
<dbReference type="GO" id="GO:0005829">
    <property type="term" value="C:cytosol"/>
    <property type="evidence" value="ECO:0007669"/>
    <property type="project" value="TreeGrafter"/>
</dbReference>
<dbReference type="GO" id="GO:0043022">
    <property type="term" value="F:ribosome binding"/>
    <property type="evidence" value="ECO:0007669"/>
    <property type="project" value="UniProtKB-UniRule"/>
</dbReference>
<dbReference type="GO" id="GO:0019843">
    <property type="term" value="F:rRNA binding"/>
    <property type="evidence" value="ECO:0007669"/>
    <property type="project" value="UniProtKB-UniRule"/>
</dbReference>
<dbReference type="GO" id="GO:0003743">
    <property type="term" value="F:translation initiation factor activity"/>
    <property type="evidence" value="ECO:0007669"/>
    <property type="project" value="UniProtKB-UniRule"/>
</dbReference>
<dbReference type="CDD" id="cd04451">
    <property type="entry name" value="S1_IF1"/>
    <property type="match status" value="1"/>
</dbReference>
<dbReference type="FunFam" id="2.40.50.140:FF:000002">
    <property type="entry name" value="Translation initiation factor IF-1"/>
    <property type="match status" value="1"/>
</dbReference>
<dbReference type="Gene3D" id="2.40.50.140">
    <property type="entry name" value="Nucleic acid-binding proteins"/>
    <property type="match status" value="1"/>
</dbReference>
<dbReference type="HAMAP" id="MF_00075">
    <property type="entry name" value="IF_1"/>
    <property type="match status" value="1"/>
</dbReference>
<dbReference type="InterPro" id="IPR012340">
    <property type="entry name" value="NA-bd_OB-fold"/>
</dbReference>
<dbReference type="InterPro" id="IPR006196">
    <property type="entry name" value="RNA-binding_domain_S1_IF1"/>
</dbReference>
<dbReference type="InterPro" id="IPR004368">
    <property type="entry name" value="TIF_IF1"/>
</dbReference>
<dbReference type="NCBIfam" id="TIGR00008">
    <property type="entry name" value="infA"/>
    <property type="match status" value="1"/>
</dbReference>
<dbReference type="PANTHER" id="PTHR33370">
    <property type="entry name" value="TRANSLATION INITIATION FACTOR IF-1, CHLOROPLASTIC"/>
    <property type="match status" value="1"/>
</dbReference>
<dbReference type="PANTHER" id="PTHR33370:SF1">
    <property type="entry name" value="TRANSLATION INITIATION FACTOR IF-1, CHLOROPLASTIC"/>
    <property type="match status" value="1"/>
</dbReference>
<dbReference type="Pfam" id="PF01176">
    <property type="entry name" value="eIF-1a"/>
    <property type="match status" value="1"/>
</dbReference>
<dbReference type="SUPFAM" id="SSF50249">
    <property type="entry name" value="Nucleic acid-binding proteins"/>
    <property type="match status" value="1"/>
</dbReference>
<dbReference type="PROSITE" id="PS50832">
    <property type="entry name" value="S1_IF1_TYPE"/>
    <property type="match status" value="1"/>
</dbReference>
<sequence>MAKEELIEMHGLVDEVLPDSRFRVTLDNGHKLVAYTSGKMRKNHIRILAGDQVSLELSPYDLSKGRITFRHIAGRGPGPAQRPSR</sequence>
<keyword id="KW-0963">Cytoplasm</keyword>
<keyword id="KW-0396">Initiation factor</keyword>
<keyword id="KW-0648">Protein biosynthesis</keyword>
<keyword id="KW-1185">Reference proteome</keyword>
<keyword id="KW-0694">RNA-binding</keyword>
<keyword id="KW-0699">rRNA-binding</keyword>